<accession>Q1R5D7</accession>
<dbReference type="EMBL" id="CP000243">
    <property type="protein sequence ID" value="ABE09427.1"/>
    <property type="molecule type" value="Genomic_DNA"/>
</dbReference>
<dbReference type="RefSeq" id="WP_001190062.1">
    <property type="nucleotide sequence ID" value="NZ_CP064825.1"/>
</dbReference>
<dbReference type="SMR" id="Q1R5D7"/>
<dbReference type="GeneID" id="93778510"/>
<dbReference type="KEGG" id="eci:UTI89_C3998"/>
<dbReference type="HOGENOM" id="CLU_113319_1_4_6"/>
<dbReference type="Proteomes" id="UP000001952">
    <property type="component" value="Chromosome"/>
</dbReference>
<dbReference type="GO" id="GO:0003700">
    <property type="term" value="F:DNA-binding transcription factor activity"/>
    <property type="evidence" value="ECO:0007669"/>
    <property type="project" value="UniProtKB-UniRule"/>
</dbReference>
<dbReference type="GO" id="GO:0016151">
    <property type="term" value="F:nickel cation binding"/>
    <property type="evidence" value="ECO:0007669"/>
    <property type="project" value="UniProtKB-UniRule"/>
</dbReference>
<dbReference type="GO" id="GO:0043565">
    <property type="term" value="F:sequence-specific DNA binding"/>
    <property type="evidence" value="ECO:0007669"/>
    <property type="project" value="UniProtKB-ARBA"/>
</dbReference>
<dbReference type="GO" id="GO:0010045">
    <property type="term" value="P:response to nickel cation"/>
    <property type="evidence" value="ECO:0007669"/>
    <property type="project" value="InterPro"/>
</dbReference>
<dbReference type="CDD" id="cd22231">
    <property type="entry name" value="RHH_NikR_HicB-like"/>
    <property type="match status" value="1"/>
</dbReference>
<dbReference type="FunFam" id="1.10.1220.10:FF:000001">
    <property type="entry name" value="Nickel-responsive regulator"/>
    <property type="match status" value="1"/>
</dbReference>
<dbReference type="FunFam" id="3.30.70.1150:FF:000002">
    <property type="entry name" value="Nickel-responsive regulator"/>
    <property type="match status" value="1"/>
</dbReference>
<dbReference type="Gene3D" id="3.30.70.1150">
    <property type="entry name" value="ACT-like. Chain A, domain 2"/>
    <property type="match status" value="1"/>
</dbReference>
<dbReference type="Gene3D" id="1.10.1220.10">
    <property type="entry name" value="Met repressor-like"/>
    <property type="match status" value="1"/>
</dbReference>
<dbReference type="HAMAP" id="MF_00476">
    <property type="entry name" value="NikR"/>
    <property type="match status" value="1"/>
</dbReference>
<dbReference type="InterPro" id="IPR027271">
    <property type="entry name" value="Acetolactate_synth/TF_NikR_C"/>
</dbReference>
<dbReference type="InterPro" id="IPR045865">
    <property type="entry name" value="ACT-like_dom_sf"/>
</dbReference>
<dbReference type="InterPro" id="IPR013321">
    <property type="entry name" value="Arc_rbn_hlx_hlx"/>
</dbReference>
<dbReference type="InterPro" id="IPR002145">
    <property type="entry name" value="CopG"/>
</dbReference>
<dbReference type="InterPro" id="IPR050192">
    <property type="entry name" value="CopG/NikR_regulator"/>
</dbReference>
<dbReference type="InterPro" id="IPR022988">
    <property type="entry name" value="Ni_resp_reg_NikR"/>
</dbReference>
<dbReference type="InterPro" id="IPR014160">
    <property type="entry name" value="Nickel_NikR_proteobac"/>
</dbReference>
<dbReference type="InterPro" id="IPR010985">
    <property type="entry name" value="Ribbon_hlx_hlx"/>
</dbReference>
<dbReference type="InterPro" id="IPR014864">
    <property type="entry name" value="TF_NikR_Ni-bd_C"/>
</dbReference>
<dbReference type="NCBIfam" id="TIGR02793">
    <property type="entry name" value="nikR"/>
    <property type="match status" value="1"/>
</dbReference>
<dbReference type="NCBIfam" id="NF002815">
    <property type="entry name" value="PRK02967.1"/>
    <property type="match status" value="1"/>
</dbReference>
<dbReference type="NCBIfam" id="NF003381">
    <property type="entry name" value="PRK04460.1"/>
    <property type="match status" value="1"/>
</dbReference>
<dbReference type="PANTHER" id="PTHR34719">
    <property type="entry name" value="NICKEL-RESPONSIVE REGULATOR"/>
    <property type="match status" value="1"/>
</dbReference>
<dbReference type="PANTHER" id="PTHR34719:SF2">
    <property type="entry name" value="NICKEL-RESPONSIVE REGULATOR"/>
    <property type="match status" value="1"/>
</dbReference>
<dbReference type="Pfam" id="PF08753">
    <property type="entry name" value="NikR_C"/>
    <property type="match status" value="1"/>
</dbReference>
<dbReference type="Pfam" id="PF01402">
    <property type="entry name" value="RHH_1"/>
    <property type="match status" value="1"/>
</dbReference>
<dbReference type="SUPFAM" id="SSF55021">
    <property type="entry name" value="ACT-like"/>
    <property type="match status" value="1"/>
</dbReference>
<dbReference type="SUPFAM" id="SSF47598">
    <property type="entry name" value="Ribbon-helix-helix"/>
    <property type="match status" value="1"/>
</dbReference>
<feature type="chain" id="PRO_1000014065" description="Nickel-responsive regulator">
    <location>
        <begin position="1"/>
        <end position="133"/>
    </location>
</feature>
<feature type="binding site" evidence="1">
    <location>
        <position position="76"/>
    </location>
    <ligand>
        <name>Ni(2+)</name>
        <dbReference type="ChEBI" id="CHEBI:49786"/>
    </ligand>
</feature>
<feature type="binding site" evidence="1">
    <location>
        <position position="87"/>
    </location>
    <ligand>
        <name>Ni(2+)</name>
        <dbReference type="ChEBI" id="CHEBI:49786"/>
    </ligand>
</feature>
<feature type="binding site" evidence="1">
    <location>
        <position position="89"/>
    </location>
    <ligand>
        <name>Ni(2+)</name>
        <dbReference type="ChEBI" id="CHEBI:49786"/>
    </ligand>
</feature>
<feature type="binding site" evidence="1">
    <location>
        <position position="95"/>
    </location>
    <ligand>
        <name>Ni(2+)</name>
        <dbReference type="ChEBI" id="CHEBI:49786"/>
    </ligand>
</feature>
<keyword id="KW-0238">DNA-binding</keyword>
<keyword id="KW-0479">Metal-binding</keyword>
<keyword id="KW-0533">Nickel</keyword>
<keyword id="KW-0678">Repressor</keyword>
<keyword id="KW-0804">Transcription</keyword>
<keyword id="KW-0805">Transcription regulation</keyword>
<proteinExistence type="inferred from homology"/>
<evidence type="ECO:0000255" key="1">
    <source>
        <dbReference type="HAMAP-Rule" id="MF_00476"/>
    </source>
</evidence>
<sequence>MQRVTITLDDDLLETLDSLSQRRGYNNRSEAIRDILRSALAQEATQQHGTQGFAVLSYVYEHEKRDLASRIVSTQHHHHDLSVATLHVHINHDDCLEIAVLKGDMGDVQHFADDVIAQRGVRHGHLQCLPKED</sequence>
<reference key="1">
    <citation type="journal article" date="2006" name="Proc. Natl. Acad. Sci. U.S.A.">
        <title>Identification of genes subject to positive selection in uropathogenic strains of Escherichia coli: a comparative genomics approach.</title>
        <authorList>
            <person name="Chen S.L."/>
            <person name="Hung C.-S."/>
            <person name="Xu J."/>
            <person name="Reigstad C.S."/>
            <person name="Magrini V."/>
            <person name="Sabo A."/>
            <person name="Blasiar D."/>
            <person name="Bieri T."/>
            <person name="Meyer R.R."/>
            <person name="Ozersky P."/>
            <person name="Armstrong J.R."/>
            <person name="Fulton R.S."/>
            <person name="Latreille J.P."/>
            <person name="Spieth J."/>
            <person name="Hooton T.M."/>
            <person name="Mardis E.R."/>
            <person name="Hultgren S.J."/>
            <person name="Gordon J.I."/>
        </authorList>
    </citation>
    <scope>NUCLEOTIDE SEQUENCE [LARGE SCALE GENOMIC DNA]</scope>
    <source>
        <strain>UTI89 / UPEC</strain>
    </source>
</reference>
<name>NIKR_ECOUT</name>
<gene>
    <name evidence="1" type="primary">nikR</name>
    <name type="ordered locus">UTI89_C3998</name>
</gene>
<organism>
    <name type="scientific">Escherichia coli (strain UTI89 / UPEC)</name>
    <dbReference type="NCBI Taxonomy" id="364106"/>
    <lineage>
        <taxon>Bacteria</taxon>
        <taxon>Pseudomonadati</taxon>
        <taxon>Pseudomonadota</taxon>
        <taxon>Gammaproteobacteria</taxon>
        <taxon>Enterobacterales</taxon>
        <taxon>Enterobacteriaceae</taxon>
        <taxon>Escherichia</taxon>
    </lineage>
</organism>
<protein>
    <recommendedName>
        <fullName evidence="1">Nickel-responsive regulator</fullName>
    </recommendedName>
</protein>
<comment type="function">
    <text evidence="1">Transcriptional repressor of the nikABCDE operon. Is active in the presence of excessive concentrations of intracellular nickel.</text>
</comment>
<comment type="cofactor">
    <cofactor evidence="1">
        <name>Ni(2+)</name>
        <dbReference type="ChEBI" id="CHEBI:49786"/>
    </cofactor>
    <text evidence="1">Binds 1 nickel ion per subunit.</text>
</comment>
<comment type="subunit">
    <text evidence="1">Homotetramer.</text>
</comment>
<comment type="similarity">
    <text evidence="1">Belongs to the transcriptional regulatory CopG/NikR family.</text>
</comment>